<accession>C4Z1J4</accession>
<gene>
    <name evidence="1" type="primary">dnaK</name>
    <name type="ordered locus">EUBELI_01360</name>
</gene>
<proteinExistence type="inferred from homology"/>
<dbReference type="EMBL" id="CP001104">
    <property type="protein sequence ID" value="ACR72355.1"/>
    <property type="molecule type" value="Genomic_DNA"/>
</dbReference>
<dbReference type="RefSeq" id="WP_012739590.1">
    <property type="nucleotide sequence ID" value="NC_012778.1"/>
</dbReference>
<dbReference type="SMR" id="C4Z1J4"/>
<dbReference type="STRING" id="515620.EUBELI_01360"/>
<dbReference type="GeneID" id="41356068"/>
<dbReference type="KEGG" id="eel:EUBELI_01360"/>
<dbReference type="eggNOG" id="COG0443">
    <property type="taxonomic scope" value="Bacteria"/>
</dbReference>
<dbReference type="HOGENOM" id="CLU_005965_2_4_9"/>
<dbReference type="Proteomes" id="UP000001476">
    <property type="component" value="Chromosome"/>
</dbReference>
<dbReference type="GO" id="GO:0005524">
    <property type="term" value="F:ATP binding"/>
    <property type="evidence" value="ECO:0007669"/>
    <property type="project" value="UniProtKB-UniRule"/>
</dbReference>
<dbReference type="GO" id="GO:0140662">
    <property type="term" value="F:ATP-dependent protein folding chaperone"/>
    <property type="evidence" value="ECO:0007669"/>
    <property type="project" value="InterPro"/>
</dbReference>
<dbReference type="GO" id="GO:0051082">
    <property type="term" value="F:unfolded protein binding"/>
    <property type="evidence" value="ECO:0007669"/>
    <property type="project" value="InterPro"/>
</dbReference>
<dbReference type="CDD" id="cd10234">
    <property type="entry name" value="ASKHA_NBD_HSP70_DnaK-like"/>
    <property type="match status" value="1"/>
</dbReference>
<dbReference type="FunFam" id="2.60.34.10:FF:000014">
    <property type="entry name" value="Chaperone protein DnaK HSP70"/>
    <property type="match status" value="1"/>
</dbReference>
<dbReference type="FunFam" id="1.20.1270.10:FF:000001">
    <property type="entry name" value="Molecular chaperone DnaK"/>
    <property type="match status" value="1"/>
</dbReference>
<dbReference type="FunFam" id="3.30.420.40:FF:000071">
    <property type="entry name" value="Molecular chaperone DnaK"/>
    <property type="match status" value="1"/>
</dbReference>
<dbReference type="FunFam" id="3.90.640.10:FF:000003">
    <property type="entry name" value="Molecular chaperone DnaK"/>
    <property type="match status" value="1"/>
</dbReference>
<dbReference type="Gene3D" id="1.20.1270.10">
    <property type="match status" value="1"/>
</dbReference>
<dbReference type="Gene3D" id="3.30.30.30">
    <property type="match status" value="1"/>
</dbReference>
<dbReference type="Gene3D" id="3.30.420.40">
    <property type="match status" value="3"/>
</dbReference>
<dbReference type="Gene3D" id="3.90.640.10">
    <property type="entry name" value="Actin, Chain A, domain 4"/>
    <property type="match status" value="1"/>
</dbReference>
<dbReference type="Gene3D" id="2.60.34.10">
    <property type="entry name" value="Substrate Binding Domain Of DNAk, Chain A, domain 1"/>
    <property type="match status" value="1"/>
</dbReference>
<dbReference type="HAMAP" id="MF_00332">
    <property type="entry name" value="DnaK"/>
    <property type="match status" value="1"/>
</dbReference>
<dbReference type="InterPro" id="IPR043129">
    <property type="entry name" value="ATPase_NBD"/>
</dbReference>
<dbReference type="InterPro" id="IPR012725">
    <property type="entry name" value="Chaperone_DnaK"/>
</dbReference>
<dbReference type="InterPro" id="IPR018181">
    <property type="entry name" value="Heat_shock_70_CS"/>
</dbReference>
<dbReference type="InterPro" id="IPR029048">
    <property type="entry name" value="HSP70_C_sf"/>
</dbReference>
<dbReference type="InterPro" id="IPR029047">
    <property type="entry name" value="HSP70_peptide-bd_sf"/>
</dbReference>
<dbReference type="InterPro" id="IPR013126">
    <property type="entry name" value="Hsp_70_fam"/>
</dbReference>
<dbReference type="NCBIfam" id="NF001413">
    <property type="entry name" value="PRK00290.1"/>
    <property type="match status" value="1"/>
</dbReference>
<dbReference type="NCBIfam" id="TIGR02350">
    <property type="entry name" value="prok_dnaK"/>
    <property type="match status" value="1"/>
</dbReference>
<dbReference type="PANTHER" id="PTHR19375">
    <property type="entry name" value="HEAT SHOCK PROTEIN 70KDA"/>
    <property type="match status" value="1"/>
</dbReference>
<dbReference type="Pfam" id="PF00012">
    <property type="entry name" value="HSP70"/>
    <property type="match status" value="1"/>
</dbReference>
<dbReference type="PRINTS" id="PR00301">
    <property type="entry name" value="HEATSHOCK70"/>
</dbReference>
<dbReference type="SUPFAM" id="SSF53067">
    <property type="entry name" value="Actin-like ATPase domain"/>
    <property type="match status" value="2"/>
</dbReference>
<dbReference type="SUPFAM" id="SSF100934">
    <property type="entry name" value="Heat shock protein 70kD (HSP70), C-terminal subdomain"/>
    <property type="match status" value="1"/>
</dbReference>
<dbReference type="SUPFAM" id="SSF100920">
    <property type="entry name" value="Heat shock protein 70kD (HSP70), peptide-binding domain"/>
    <property type="match status" value="1"/>
</dbReference>
<dbReference type="PROSITE" id="PS00297">
    <property type="entry name" value="HSP70_1"/>
    <property type="match status" value="1"/>
</dbReference>
<dbReference type="PROSITE" id="PS00329">
    <property type="entry name" value="HSP70_2"/>
    <property type="match status" value="1"/>
</dbReference>
<dbReference type="PROSITE" id="PS01036">
    <property type="entry name" value="HSP70_3"/>
    <property type="match status" value="1"/>
</dbReference>
<feature type="chain" id="PRO_1000205187" description="Chaperone protein DnaK">
    <location>
        <begin position="1"/>
        <end position="628"/>
    </location>
</feature>
<feature type="region of interest" description="Disordered" evidence="2">
    <location>
        <begin position="589"/>
        <end position="628"/>
    </location>
</feature>
<feature type="compositionally biased region" description="Gly residues" evidence="2">
    <location>
        <begin position="591"/>
        <end position="605"/>
    </location>
</feature>
<feature type="modified residue" description="Phosphothreonine; by autocatalysis" evidence="1">
    <location>
        <position position="174"/>
    </location>
</feature>
<keyword id="KW-0067">ATP-binding</keyword>
<keyword id="KW-0143">Chaperone</keyword>
<keyword id="KW-0547">Nucleotide-binding</keyword>
<keyword id="KW-0597">Phosphoprotein</keyword>
<keyword id="KW-1185">Reference proteome</keyword>
<keyword id="KW-0346">Stress response</keyword>
<protein>
    <recommendedName>
        <fullName evidence="1">Chaperone protein DnaK</fullName>
    </recommendedName>
    <alternativeName>
        <fullName evidence="1">HSP70</fullName>
    </alternativeName>
    <alternativeName>
        <fullName evidence="1">Heat shock 70 kDa protein</fullName>
    </alternativeName>
    <alternativeName>
        <fullName evidence="1">Heat shock protein 70</fullName>
    </alternativeName>
</protein>
<sequence length="628" mass="66574">MGKIIGIDLGTTNSCVAVMEGGKPVVIANAEGLRTTPSVVAFSKTGERLVGDPAKRQAVTNADKTISSIKRHMGTDYKVEIDGKKYTPQEISAMILQKLKSDAENYLGEKVTEAVITVPAYFNDAQRQATKDAGKIAGLDVKRIINEPTAAALAYGLDNEHEQKIMVYDLGGGTFDVSIIEIGDGVIEVLATAGNNKLGGDDFDNAVTQYMLNDFKAKEGVDLSKDTMALQRLKEAAEKAKKELSSTTQTEINLPYITATAEGPKHFEMTLTRAKFDELTHDLVEKTAEPVKNALSDAGLTASELSKVLLVGGSTRIPAVQDKVKSLTGHEPSKTLNPDECVAIGASIQGGKLAGDAGAGDILLLDVTPLSLSIETMGGIATRLIERNTTIPTKKSQIFSTAADNQTAVDINVVQGERQFARDNKSLGQFRLDGIPPARRGVPQIEVTFDIDANGIVNVSAKDLGTGKEQHITITAGSNMSDEDIDKAVKEAAEFEAQDKKRKDAIDARNEADSMVFQTQKAMDEAGDKLDASDKAAVETDLNALKALVDGSDPENMTDAQVDEIKAAKEKLMESAQKLFAKLYESQQAAGGAGPDMGAGAGPDMGAGASNGSAPYGDDVVDGDYKEV</sequence>
<reference key="1">
    <citation type="journal article" date="2009" name="Proc. Natl. Acad. Sci. U.S.A.">
        <title>Characterizing a model human gut microbiota composed of members of its two dominant bacterial phyla.</title>
        <authorList>
            <person name="Mahowald M.A."/>
            <person name="Rey F.E."/>
            <person name="Seedorf H."/>
            <person name="Turnbaugh P.J."/>
            <person name="Fulton R.S."/>
            <person name="Wollam A."/>
            <person name="Shah N."/>
            <person name="Wang C."/>
            <person name="Magrini V."/>
            <person name="Wilson R.K."/>
            <person name="Cantarel B.L."/>
            <person name="Coutinho P.M."/>
            <person name="Henrissat B."/>
            <person name="Crock L.W."/>
            <person name="Russell A."/>
            <person name="Verberkmoes N.C."/>
            <person name="Hettich R.L."/>
            <person name="Gordon J.I."/>
        </authorList>
    </citation>
    <scope>NUCLEOTIDE SEQUENCE [LARGE SCALE GENOMIC DNA]</scope>
    <source>
        <strain>ATCC 27750 / DSM 3376 / VPI C15-48 / C15-B4</strain>
    </source>
</reference>
<evidence type="ECO:0000255" key="1">
    <source>
        <dbReference type="HAMAP-Rule" id="MF_00332"/>
    </source>
</evidence>
<evidence type="ECO:0000256" key="2">
    <source>
        <dbReference type="SAM" id="MobiDB-lite"/>
    </source>
</evidence>
<comment type="function">
    <text evidence="1">Acts as a chaperone.</text>
</comment>
<comment type="induction">
    <text evidence="1">By stress conditions e.g. heat shock.</text>
</comment>
<comment type="similarity">
    <text evidence="1">Belongs to the heat shock protein 70 family.</text>
</comment>
<organism>
    <name type="scientific">Lachnospira eligens (strain ATCC 27750 / DSM 3376 / VPI C15-48 / C15-B4)</name>
    <name type="common">Eubacterium eligens</name>
    <dbReference type="NCBI Taxonomy" id="515620"/>
    <lineage>
        <taxon>Bacteria</taxon>
        <taxon>Bacillati</taxon>
        <taxon>Bacillota</taxon>
        <taxon>Clostridia</taxon>
        <taxon>Lachnospirales</taxon>
        <taxon>Lachnospiraceae</taxon>
        <taxon>Lachnospira</taxon>
    </lineage>
</organism>
<name>DNAK_LACE2</name>